<protein>
    <recommendedName>
        <fullName evidence="1">Ribonuclease P protein component 4</fullName>
        <shortName evidence="1">RNase P component 4</shortName>
        <ecNumber evidence="1">3.1.26.5</ecNumber>
    </recommendedName>
    <alternativeName>
        <fullName evidence="1">Rpp21</fullName>
    </alternativeName>
</protein>
<keyword id="KW-0963">Cytoplasm</keyword>
<keyword id="KW-0255">Endonuclease</keyword>
<keyword id="KW-0378">Hydrolase</keyword>
<keyword id="KW-0479">Metal-binding</keyword>
<keyword id="KW-0540">Nuclease</keyword>
<keyword id="KW-1185">Reference proteome</keyword>
<keyword id="KW-0819">tRNA processing</keyword>
<keyword id="KW-0862">Zinc</keyword>
<name>RNP4_METST</name>
<proteinExistence type="inferred from homology"/>
<gene>
    <name evidence="1" type="primary">rnp4</name>
    <name type="ordered locus">Msp_0592</name>
</gene>
<accession>Q2NGR3</accession>
<sequence length="104" mass="12507">MSRRKRPNWINTIALERMQILFEQAEKEFSKHPERSDRYVKLTRNISTKYNIPLPNYWRGRFCKNCNKFLKPGSNLRVRLSNNTISRKCLECGDLKKVPYTKKN</sequence>
<dbReference type="EC" id="3.1.26.5" evidence="1"/>
<dbReference type="EMBL" id="CP000102">
    <property type="protein sequence ID" value="ABC56990.1"/>
    <property type="molecule type" value="Genomic_DNA"/>
</dbReference>
<dbReference type="SMR" id="Q2NGR3"/>
<dbReference type="STRING" id="339860.Msp_0592"/>
<dbReference type="KEGG" id="mst:Msp_0592"/>
<dbReference type="eggNOG" id="arCOG04345">
    <property type="taxonomic scope" value="Archaea"/>
</dbReference>
<dbReference type="HOGENOM" id="CLU_079140_3_0_2"/>
<dbReference type="OrthoDB" id="10058at2157"/>
<dbReference type="Proteomes" id="UP000001931">
    <property type="component" value="Chromosome"/>
</dbReference>
<dbReference type="GO" id="GO:0005737">
    <property type="term" value="C:cytoplasm"/>
    <property type="evidence" value="ECO:0007669"/>
    <property type="project" value="UniProtKB-SubCell"/>
</dbReference>
<dbReference type="GO" id="GO:0030677">
    <property type="term" value="C:ribonuclease P complex"/>
    <property type="evidence" value="ECO:0007669"/>
    <property type="project" value="UniProtKB-UniRule"/>
</dbReference>
<dbReference type="GO" id="GO:0004526">
    <property type="term" value="F:ribonuclease P activity"/>
    <property type="evidence" value="ECO:0007669"/>
    <property type="project" value="UniProtKB-UniRule"/>
</dbReference>
<dbReference type="GO" id="GO:0008270">
    <property type="term" value="F:zinc ion binding"/>
    <property type="evidence" value="ECO:0007669"/>
    <property type="project" value="UniProtKB-UniRule"/>
</dbReference>
<dbReference type="GO" id="GO:0001682">
    <property type="term" value="P:tRNA 5'-leader removal"/>
    <property type="evidence" value="ECO:0007669"/>
    <property type="project" value="UniProtKB-UniRule"/>
</dbReference>
<dbReference type="Gene3D" id="6.20.50.20">
    <property type="match status" value="1"/>
</dbReference>
<dbReference type="Gene3D" id="1.20.5.420">
    <property type="entry name" value="Immunoglobulin FC, subunit C"/>
    <property type="match status" value="1"/>
</dbReference>
<dbReference type="HAMAP" id="MF_00757">
    <property type="entry name" value="RNase_P_4"/>
    <property type="match status" value="1"/>
</dbReference>
<dbReference type="InterPro" id="IPR016432">
    <property type="entry name" value="RNP4"/>
</dbReference>
<dbReference type="InterPro" id="IPR007175">
    <property type="entry name" value="Rpr2/Snm1/Rpp21"/>
</dbReference>
<dbReference type="PANTHER" id="PTHR14742:SF0">
    <property type="entry name" value="RIBONUCLEASE P PROTEIN SUBUNIT P21"/>
    <property type="match status" value="1"/>
</dbReference>
<dbReference type="PANTHER" id="PTHR14742">
    <property type="entry name" value="RIBONUCLEASE P SUBUNIT P21"/>
    <property type="match status" value="1"/>
</dbReference>
<dbReference type="Pfam" id="PF04032">
    <property type="entry name" value="Rpr2"/>
    <property type="match status" value="1"/>
</dbReference>
<dbReference type="PIRSF" id="PIRSF004878">
    <property type="entry name" value="RNase_P_4"/>
    <property type="match status" value="1"/>
</dbReference>
<comment type="function">
    <text evidence="1">Part of ribonuclease P, a protein complex that generates mature tRNA molecules by cleaving their 5'-ends.</text>
</comment>
<comment type="catalytic activity">
    <reaction evidence="1">
        <text>Endonucleolytic cleavage of RNA, removing 5'-extranucleotides from tRNA precursor.</text>
        <dbReference type="EC" id="3.1.26.5"/>
    </reaction>
</comment>
<comment type="cofactor">
    <cofactor evidence="1">
        <name>Zn(2+)</name>
        <dbReference type="ChEBI" id="CHEBI:29105"/>
    </cofactor>
    <text evidence="1">Binds 1 zinc ion per subunit.</text>
</comment>
<comment type="subunit">
    <text evidence="1">Consists of a catalytic RNA component and at least 4-5 protein subunits.</text>
</comment>
<comment type="subcellular location">
    <subcellularLocation>
        <location evidence="1">Cytoplasm</location>
    </subcellularLocation>
</comment>
<comment type="similarity">
    <text evidence="1">Belongs to the eukaryotic/archaeal RNase P protein component 4 family.</text>
</comment>
<evidence type="ECO:0000255" key="1">
    <source>
        <dbReference type="HAMAP-Rule" id="MF_00757"/>
    </source>
</evidence>
<reference key="1">
    <citation type="journal article" date="2006" name="J. Bacteriol.">
        <title>The genome sequence of Methanosphaera stadtmanae reveals why this human intestinal archaeon is restricted to methanol and H2 for methane formation and ATP synthesis.</title>
        <authorList>
            <person name="Fricke W.F."/>
            <person name="Seedorf H."/>
            <person name="Henne A."/>
            <person name="Kruer M."/>
            <person name="Liesegang H."/>
            <person name="Hedderich R."/>
            <person name="Gottschalk G."/>
            <person name="Thauer R.K."/>
        </authorList>
    </citation>
    <scope>NUCLEOTIDE SEQUENCE [LARGE SCALE GENOMIC DNA]</scope>
    <source>
        <strain>ATCC 43021 / DSM 3091 / JCM 11832 / MCB-3</strain>
    </source>
</reference>
<organism>
    <name type="scientific">Methanosphaera stadtmanae (strain ATCC 43021 / DSM 3091 / JCM 11832 / MCB-3)</name>
    <dbReference type="NCBI Taxonomy" id="339860"/>
    <lineage>
        <taxon>Archaea</taxon>
        <taxon>Methanobacteriati</taxon>
        <taxon>Methanobacteriota</taxon>
        <taxon>Methanomada group</taxon>
        <taxon>Methanobacteria</taxon>
        <taxon>Methanobacteriales</taxon>
        <taxon>Methanobacteriaceae</taxon>
        <taxon>Methanosphaera</taxon>
    </lineage>
</organism>
<feature type="chain" id="PRO_1000046634" description="Ribonuclease P protein component 4">
    <location>
        <begin position="1"/>
        <end position="104"/>
    </location>
</feature>
<feature type="binding site" evidence="1">
    <location>
        <position position="63"/>
    </location>
    <ligand>
        <name>Zn(2+)</name>
        <dbReference type="ChEBI" id="CHEBI:29105"/>
    </ligand>
</feature>
<feature type="binding site" evidence="1">
    <location>
        <position position="66"/>
    </location>
    <ligand>
        <name>Zn(2+)</name>
        <dbReference type="ChEBI" id="CHEBI:29105"/>
    </ligand>
</feature>
<feature type="binding site" evidence="1">
    <location>
        <position position="89"/>
    </location>
    <ligand>
        <name>Zn(2+)</name>
        <dbReference type="ChEBI" id="CHEBI:29105"/>
    </ligand>
</feature>
<feature type="binding site" evidence="1">
    <location>
        <position position="92"/>
    </location>
    <ligand>
        <name>Zn(2+)</name>
        <dbReference type="ChEBI" id="CHEBI:29105"/>
    </ligand>
</feature>